<reference key="1">
    <citation type="journal article" date="2015" name="Proc. Natl. Acad. Sci. U.S.A.">
        <title>Trichodesmium genome maintains abundant, widespread noncoding DNA in situ, despite oligotrophic lifestyle.</title>
        <authorList>
            <person name="Walworth N."/>
            <person name="Pfreundt U."/>
            <person name="Nelson W.C."/>
            <person name="Mincer T."/>
            <person name="Heidelberg J.F."/>
            <person name="Fu F."/>
            <person name="Waterbury J.B."/>
            <person name="Glavina del Rio T."/>
            <person name="Goodwin L."/>
            <person name="Kyrpides N.C."/>
            <person name="Land M.L."/>
            <person name="Woyke T."/>
            <person name="Hutchins D.A."/>
            <person name="Hess W.R."/>
            <person name="Webb E.A."/>
        </authorList>
    </citation>
    <scope>NUCLEOTIDE SEQUENCE [LARGE SCALE GENOMIC DNA]</scope>
    <source>
        <strain>IMS101</strain>
    </source>
</reference>
<evidence type="ECO:0000255" key="1">
    <source>
        <dbReference type="HAMAP-Rule" id="MF_01302"/>
    </source>
</evidence>
<evidence type="ECO:0000305" key="2"/>
<organism>
    <name type="scientific">Trichodesmium erythraeum (strain IMS101)</name>
    <dbReference type="NCBI Taxonomy" id="203124"/>
    <lineage>
        <taxon>Bacteria</taxon>
        <taxon>Bacillati</taxon>
        <taxon>Cyanobacteriota</taxon>
        <taxon>Cyanophyceae</taxon>
        <taxon>Oscillatoriophycideae</taxon>
        <taxon>Oscillatoriales</taxon>
        <taxon>Microcoleaceae</taxon>
        <taxon>Trichodesmium</taxon>
    </lineage>
</organism>
<dbReference type="EMBL" id="CP000393">
    <property type="protein sequence ID" value="ABG52154.1"/>
    <property type="molecule type" value="Genomic_DNA"/>
</dbReference>
<dbReference type="RefSeq" id="WP_011612509.1">
    <property type="nucleotide sequence ID" value="NC_008312.1"/>
</dbReference>
<dbReference type="SMR" id="Q110C0"/>
<dbReference type="STRING" id="203124.Tery_2999"/>
<dbReference type="KEGG" id="ter:Tery_2999"/>
<dbReference type="eggNOG" id="COG0096">
    <property type="taxonomic scope" value="Bacteria"/>
</dbReference>
<dbReference type="HOGENOM" id="CLU_098428_0_2_3"/>
<dbReference type="OrthoDB" id="9802617at2"/>
<dbReference type="GO" id="GO:1990904">
    <property type="term" value="C:ribonucleoprotein complex"/>
    <property type="evidence" value="ECO:0007669"/>
    <property type="project" value="UniProtKB-KW"/>
</dbReference>
<dbReference type="GO" id="GO:0005840">
    <property type="term" value="C:ribosome"/>
    <property type="evidence" value="ECO:0007669"/>
    <property type="project" value="UniProtKB-KW"/>
</dbReference>
<dbReference type="GO" id="GO:0019843">
    <property type="term" value="F:rRNA binding"/>
    <property type="evidence" value="ECO:0007669"/>
    <property type="project" value="UniProtKB-UniRule"/>
</dbReference>
<dbReference type="GO" id="GO:0003735">
    <property type="term" value="F:structural constituent of ribosome"/>
    <property type="evidence" value="ECO:0007669"/>
    <property type="project" value="InterPro"/>
</dbReference>
<dbReference type="GO" id="GO:0006412">
    <property type="term" value="P:translation"/>
    <property type="evidence" value="ECO:0007669"/>
    <property type="project" value="UniProtKB-UniRule"/>
</dbReference>
<dbReference type="FunFam" id="3.30.1370.30:FF:000002">
    <property type="entry name" value="30S ribosomal protein S8"/>
    <property type="match status" value="1"/>
</dbReference>
<dbReference type="FunFam" id="3.30.1490.10:FF:000001">
    <property type="entry name" value="30S ribosomal protein S8"/>
    <property type="match status" value="1"/>
</dbReference>
<dbReference type="Gene3D" id="3.30.1370.30">
    <property type="match status" value="1"/>
</dbReference>
<dbReference type="Gene3D" id="3.30.1490.10">
    <property type="match status" value="1"/>
</dbReference>
<dbReference type="HAMAP" id="MF_01302_B">
    <property type="entry name" value="Ribosomal_uS8_B"/>
    <property type="match status" value="1"/>
</dbReference>
<dbReference type="InterPro" id="IPR000630">
    <property type="entry name" value="Ribosomal_uS8"/>
</dbReference>
<dbReference type="InterPro" id="IPR047863">
    <property type="entry name" value="Ribosomal_uS8_CS"/>
</dbReference>
<dbReference type="InterPro" id="IPR035987">
    <property type="entry name" value="Ribosomal_uS8_sf"/>
</dbReference>
<dbReference type="NCBIfam" id="NF001109">
    <property type="entry name" value="PRK00136.1"/>
    <property type="match status" value="1"/>
</dbReference>
<dbReference type="PANTHER" id="PTHR11758">
    <property type="entry name" value="40S RIBOSOMAL PROTEIN S15A"/>
    <property type="match status" value="1"/>
</dbReference>
<dbReference type="Pfam" id="PF00410">
    <property type="entry name" value="Ribosomal_S8"/>
    <property type="match status" value="1"/>
</dbReference>
<dbReference type="SUPFAM" id="SSF56047">
    <property type="entry name" value="Ribosomal protein S8"/>
    <property type="match status" value="1"/>
</dbReference>
<dbReference type="PROSITE" id="PS00053">
    <property type="entry name" value="RIBOSOMAL_S8"/>
    <property type="match status" value="1"/>
</dbReference>
<protein>
    <recommendedName>
        <fullName evidence="1">Small ribosomal subunit protein uS8</fullName>
    </recommendedName>
    <alternativeName>
        <fullName evidence="2">30S ribosomal protein S8</fullName>
    </alternativeName>
</protein>
<name>RS8_TRIEI</name>
<accession>Q110C0</accession>
<keyword id="KW-0687">Ribonucleoprotein</keyword>
<keyword id="KW-0689">Ribosomal protein</keyword>
<keyword id="KW-0694">RNA-binding</keyword>
<keyword id="KW-0699">rRNA-binding</keyword>
<proteinExistence type="inferred from homology"/>
<comment type="function">
    <text evidence="1">One of the primary rRNA binding proteins, it binds directly to 16S rRNA central domain where it helps coordinate assembly of the platform of the 30S subunit.</text>
</comment>
<comment type="subunit">
    <text evidence="1">Part of the 30S ribosomal subunit. Contacts proteins S5 and S12.</text>
</comment>
<comment type="similarity">
    <text evidence="1">Belongs to the universal ribosomal protein uS8 family.</text>
</comment>
<gene>
    <name evidence="1" type="primary">rpsH</name>
    <name evidence="1" type="synonym">rps8</name>
    <name type="ordered locus">Tery_2999</name>
</gene>
<sequence>MAANDTISDMLTRIRNSCMAQHTTTKVPATKMTRSIAKVLKDEGFIGEFEQEGEGIKKYLVIFLKYKGKNRQPIIRYLKRVSKPGLRVYKNRKELPRVLGGIGIAIISTSSGIMTDREARKRGIGGEVLCYVW</sequence>
<feature type="chain" id="PRO_0000290957" description="Small ribosomal subunit protein uS8">
    <location>
        <begin position="1"/>
        <end position="133"/>
    </location>
</feature>